<protein>
    <recommendedName>
        <fullName>Histone-lysine N-methyltransferase SETD1A</fullName>
        <ecNumber evidence="10">2.1.1.364</ecNumber>
    </recommendedName>
    <alternativeName>
        <fullName>SET domain-containing protein 1A</fullName>
    </alternativeName>
</protein>
<dbReference type="EC" id="2.1.1.364" evidence="10"/>
<dbReference type="EMBL" id="AC149222">
    <property type="status" value="NOT_ANNOTATED_CDS"/>
    <property type="molecule type" value="Genomic_DNA"/>
</dbReference>
<dbReference type="CCDS" id="CCDS40144.1"/>
<dbReference type="RefSeq" id="NP_821172.2">
    <property type="nucleotide sequence ID" value="NM_178029.3"/>
</dbReference>
<dbReference type="RefSeq" id="XP_017177700.1">
    <property type="nucleotide sequence ID" value="XM_017322211.1"/>
</dbReference>
<dbReference type="RefSeq" id="XP_017177701.1">
    <property type="nucleotide sequence ID" value="XM_017322212.1"/>
</dbReference>
<dbReference type="RefSeq" id="XP_017177702.1">
    <property type="nucleotide sequence ID" value="XM_017322213.1"/>
</dbReference>
<dbReference type="RefSeq" id="XP_017177703.1">
    <property type="nucleotide sequence ID" value="XM_017322214.1"/>
</dbReference>
<dbReference type="SMR" id="E9PYH6"/>
<dbReference type="FunCoup" id="E9PYH6">
    <property type="interactions" value="2760"/>
</dbReference>
<dbReference type="IntAct" id="E9PYH6">
    <property type="interactions" value="3"/>
</dbReference>
<dbReference type="MINT" id="E9PYH6"/>
<dbReference type="STRING" id="10090.ENSMUSP00000047672"/>
<dbReference type="GlyGen" id="E9PYH6">
    <property type="glycosylation" value="5 sites, 1 O-linked glycan (1 site)"/>
</dbReference>
<dbReference type="iPTMnet" id="E9PYH6"/>
<dbReference type="PhosphoSitePlus" id="E9PYH6"/>
<dbReference type="SwissPalm" id="E9PYH6"/>
<dbReference type="jPOST" id="E9PYH6"/>
<dbReference type="PaxDb" id="10090-ENSMUSP00000047672"/>
<dbReference type="PeptideAtlas" id="E9PYH6"/>
<dbReference type="ProteomicsDB" id="335332"/>
<dbReference type="Pumba" id="E9PYH6"/>
<dbReference type="Ensembl" id="ENSMUST00000047075.14">
    <property type="protein sequence ID" value="ENSMUSP00000047672.8"/>
    <property type="gene ID" value="ENSMUSG00000042308.15"/>
</dbReference>
<dbReference type="Ensembl" id="ENSMUST00000047157.13">
    <property type="protein sequence ID" value="ENSMUSP00000037600.7"/>
    <property type="gene ID" value="ENSMUSG00000042308.15"/>
</dbReference>
<dbReference type="GeneID" id="233904"/>
<dbReference type="KEGG" id="mmu:233904"/>
<dbReference type="UCSC" id="uc009jwt.1">
    <property type="organism name" value="mouse"/>
</dbReference>
<dbReference type="AGR" id="MGI:2446244"/>
<dbReference type="CTD" id="9739"/>
<dbReference type="MGI" id="MGI:2446244">
    <property type="gene designation" value="Setd1a"/>
</dbReference>
<dbReference type="VEuPathDB" id="HostDB:ENSMUSG00000042308"/>
<dbReference type="eggNOG" id="KOG1080">
    <property type="taxonomic scope" value="Eukaryota"/>
</dbReference>
<dbReference type="GeneTree" id="ENSGT00940000162290"/>
<dbReference type="HOGENOM" id="CLU_001226_2_0_1"/>
<dbReference type="InParanoid" id="E9PYH6"/>
<dbReference type="OMA" id="KVSRYPD"/>
<dbReference type="OrthoDB" id="308383at2759"/>
<dbReference type="PhylomeDB" id="E9PYH6"/>
<dbReference type="TreeFam" id="TF106436"/>
<dbReference type="Reactome" id="R-MMU-3214841">
    <property type="pathway name" value="PKMTs methylate histone lysines"/>
</dbReference>
<dbReference type="Reactome" id="R-MMU-8936459">
    <property type="pathway name" value="RUNX1 regulates genes involved in megakaryocyte differentiation and platelet function"/>
</dbReference>
<dbReference type="Reactome" id="R-MMU-9772755">
    <property type="pathway name" value="Formation of WDR5-containing histone-modifying complexes"/>
</dbReference>
<dbReference type="BioGRID-ORCS" id="233904">
    <property type="hits" value="31 hits in 83 CRISPR screens"/>
</dbReference>
<dbReference type="ChiTaRS" id="Setd1a">
    <property type="organism name" value="mouse"/>
</dbReference>
<dbReference type="PRO" id="PR:E9PYH6"/>
<dbReference type="Proteomes" id="UP000000589">
    <property type="component" value="Chromosome 7"/>
</dbReference>
<dbReference type="RNAct" id="E9PYH6">
    <property type="molecule type" value="protein"/>
</dbReference>
<dbReference type="Bgee" id="ENSMUSG00000042308">
    <property type="expression patterns" value="Expressed in embryonic post-anal tail and 196 other cell types or tissues"/>
</dbReference>
<dbReference type="ExpressionAtlas" id="E9PYH6">
    <property type="expression patterns" value="baseline and differential"/>
</dbReference>
<dbReference type="GO" id="GO:0005737">
    <property type="term" value="C:cytoplasm"/>
    <property type="evidence" value="ECO:0000250"/>
    <property type="project" value="UniProtKB"/>
</dbReference>
<dbReference type="GO" id="GO:0000791">
    <property type="term" value="C:euchromatin"/>
    <property type="evidence" value="ECO:0000314"/>
    <property type="project" value="BHF-UCL"/>
</dbReference>
<dbReference type="GO" id="GO:0035097">
    <property type="term" value="C:histone methyltransferase complex"/>
    <property type="evidence" value="ECO:0000266"/>
    <property type="project" value="MGI"/>
</dbReference>
<dbReference type="GO" id="GO:0016607">
    <property type="term" value="C:nuclear speck"/>
    <property type="evidence" value="ECO:0000250"/>
    <property type="project" value="UniProtKB"/>
</dbReference>
<dbReference type="GO" id="GO:0005634">
    <property type="term" value="C:nucleus"/>
    <property type="evidence" value="ECO:0000314"/>
    <property type="project" value="MGI"/>
</dbReference>
<dbReference type="GO" id="GO:0048188">
    <property type="term" value="C:Set1C/COMPASS complex"/>
    <property type="evidence" value="ECO:0000304"/>
    <property type="project" value="ParkinsonsUK-UCL"/>
</dbReference>
<dbReference type="GO" id="GO:0042800">
    <property type="term" value="F:histone H3K4 methyltransferase activity"/>
    <property type="evidence" value="ECO:0000315"/>
    <property type="project" value="UniProtKB"/>
</dbReference>
<dbReference type="GO" id="GO:0140945">
    <property type="term" value="F:histone H3K4 monomethyltransferase activity"/>
    <property type="evidence" value="ECO:0007669"/>
    <property type="project" value="RHEA"/>
</dbReference>
<dbReference type="GO" id="GO:0140999">
    <property type="term" value="F:histone H3K4 trimethyltransferase activity"/>
    <property type="evidence" value="ECO:0007669"/>
    <property type="project" value="UniProtKB-EC"/>
</dbReference>
<dbReference type="GO" id="GO:0003723">
    <property type="term" value="F:RNA binding"/>
    <property type="evidence" value="ECO:0000250"/>
    <property type="project" value="UniProtKB"/>
</dbReference>
<dbReference type="GO" id="GO:0007420">
    <property type="term" value="P:brain development"/>
    <property type="evidence" value="ECO:0000315"/>
    <property type="project" value="UniProtKB"/>
</dbReference>
<dbReference type="GO" id="GO:0006974">
    <property type="term" value="P:DNA damage response"/>
    <property type="evidence" value="ECO:0007669"/>
    <property type="project" value="UniProtKB-KW"/>
</dbReference>
<dbReference type="GO" id="GO:0032259">
    <property type="term" value="P:methylation"/>
    <property type="evidence" value="ECO:0007669"/>
    <property type="project" value="UniProtKB-KW"/>
</dbReference>
<dbReference type="GO" id="GO:0010628">
    <property type="term" value="P:positive regulation of gene expression"/>
    <property type="evidence" value="ECO:0000315"/>
    <property type="project" value="ParkinsonsUK-UCL"/>
</dbReference>
<dbReference type="GO" id="GO:2000179">
    <property type="term" value="P:positive regulation of neural precursor cell proliferation"/>
    <property type="evidence" value="ECO:0000315"/>
    <property type="project" value="MGI"/>
</dbReference>
<dbReference type="GO" id="GO:2000648">
    <property type="term" value="P:positive regulation of stem cell proliferation"/>
    <property type="evidence" value="ECO:0000315"/>
    <property type="project" value="MGI"/>
</dbReference>
<dbReference type="GO" id="GO:1902275">
    <property type="term" value="P:regulation of chromatin organization"/>
    <property type="evidence" value="ECO:0000314"/>
    <property type="project" value="ParkinsonsUK-UCL"/>
</dbReference>
<dbReference type="GO" id="GO:0045646">
    <property type="term" value="P:regulation of erythrocyte differentiation"/>
    <property type="evidence" value="ECO:0000315"/>
    <property type="project" value="ParkinsonsUK-UCL"/>
</dbReference>
<dbReference type="GO" id="GO:0019827">
    <property type="term" value="P:stem cell population maintenance"/>
    <property type="evidence" value="ECO:0000315"/>
    <property type="project" value="MGI"/>
</dbReference>
<dbReference type="GO" id="GO:0072089">
    <property type="term" value="P:stem cell proliferation"/>
    <property type="evidence" value="ECO:0000315"/>
    <property type="project" value="MGI"/>
</dbReference>
<dbReference type="GO" id="GO:0045815">
    <property type="term" value="P:transcription initiation-coupled chromatin remodeling"/>
    <property type="evidence" value="ECO:0000303"/>
    <property type="project" value="BHF-UCL"/>
</dbReference>
<dbReference type="CDD" id="cd12548">
    <property type="entry name" value="RRM_Set1A"/>
    <property type="match status" value="1"/>
</dbReference>
<dbReference type="CDD" id="cd19169">
    <property type="entry name" value="SET_SETD1"/>
    <property type="match status" value="1"/>
</dbReference>
<dbReference type="FunFam" id="2.170.270.10:FF:000010">
    <property type="entry name" value="Histone-lysine N-methyltransferase"/>
    <property type="match status" value="1"/>
</dbReference>
<dbReference type="FunFam" id="3.30.70.330:FF:000178">
    <property type="entry name" value="Histone-lysine N-methyltransferase"/>
    <property type="match status" value="1"/>
</dbReference>
<dbReference type="Gene3D" id="3.30.70.330">
    <property type="match status" value="1"/>
</dbReference>
<dbReference type="Gene3D" id="2.170.270.10">
    <property type="entry name" value="SET domain"/>
    <property type="match status" value="1"/>
</dbReference>
<dbReference type="InterPro" id="IPR024657">
    <property type="entry name" value="COMPASS_Set1_N-SET"/>
</dbReference>
<dbReference type="InterPro" id="IPR012677">
    <property type="entry name" value="Nucleotide-bd_a/b_plait_sf"/>
</dbReference>
<dbReference type="InterPro" id="IPR003616">
    <property type="entry name" value="Post-SET_dom"/>
</dbReference>
<dbReference type="InterPro" id="IPR035979">
    <property type="entry name" value="RBD_domain_sf"/>
</dbReference>
<dbReference type="InterPro" id="IPR000504">
    <property type="entry name" value="RRM_dom"/>
</dbReference>
<dbReference type="InterPro" id="IPR044570">
    <property type="entry name" value="Set1-like"/>
</dbReference>
<dbReference type="InterPro" id="IPR034467">
    <property type="entry name" value="Set1A_RRM"/>
</dbReference>
<dbReference type="InterPro" id="IPR001214">
    <property type="entry name" value="SET_dom"/>
</dbReference>
<dbReference type="InterPro" id="IPR046341">
    <property type="entry name" value="SET_dom_sf"/>
</dbReference>
<dbReference type="InterPro" id="IPR037841">
    <property type="entry name" value="SET_SETD1A/B"/>
</dbReference>
<dbReference type="PANTHER" id="PTHR45814">
    <property type="entry name" value="HISTONE-LYSINE N-METHYLTRANSFERASE SETD1"/>
    <property type="match status" value="1"/>
</dbReference>
<dbReference type="PANTHER" id="PTHR45814:SF3">
    <property type="entry name" value="HISTONE-LYSINE N-METHYLTRANSFERASE SETD1A"/>
    <property type="match status" value="1"/>
</dbReference>
<dbReference type="Pfam" id="PF11764">
    <property type="entry name" value="N-SET"/>
    <property type="match status" value="1"/>
</dbReference>
<dbReference type="Pfam" id="PF00076">
    <property type="entry name" value="RRM_1"/>
    <property type="match status" value="1"/>
</dbReference>
<dbReference type="Pfam" id="PF00856">
    <property type="entry name" value="SET"/>
    <property type="match status" value="1"/>
</dbReference>
<dbReference type="SMART" id="SM01291">
    <property type="entry name" value="N-SET"/>
    <property type="match status" value="1"/>
</dbReference>
<dbReference type="SMART" id="SM00508">
    <property type="entry name" value="PostSET"/>
    <property type="match status" value="1"/>
</dbReference>
<dbReference type="SMART" id="SM00360">
    <property type="entry name" value="RRM"/>
    <property type="match status" value="1"/>
</dbReference>
<dbReference type="SMART" id="SM00317">
    <property type="entry name" value="SET"/>
    <property type="match status" value="1"/>
</dbReference>
<dbReference type="SUPFAM" id="SSF54928">
    <property type="entry name" value="RNA-binding domain, RBD"/>
    <property type="match status" value="1"/>
</dbReference>
<dbReference type="SUPFAM" id="SSF82199">
    <property type="entry name" value="SET domain"/>
    <property type="match status" value="1"/>
</dbReference>
<dbReference type="PROSITE" id="PS50868">
    <property type="entry name" value="POST_SET"/>
    <property type="match status" value="1"/>
</dbReference>
<dbReference type="PROSITE" id="PS50102">
    <property type="entry name" value="RRM"/>
    <property type="match status" value="1"/>
</dbReference>
<dbReference type="PROSITE" id="PS50280">
    <property type="entry name" value="SET"/>
    <property type="match status" value="1"/>
</dbReference>
<keyword id="KW-0010">Activator</keyword>
<keyword id="KW-0156">Chromatin regulator</keyword>
<keyword id="KW-0158">Chromosome</keyword>
<keyword id="KW-0963">Cytoplasm</keyword>
<keyword id="KW-0227">DNA damage</keyword>
<keyword id="KW-0489">Methyltransferase</keyword>
<keyword id="KW-0539">Nucleus</keyword>
<keyword id="KW-0597">Phosphoprotein</keyword>
<keyword id="KW-1185">Reference proteome</keyword>
<keyword id="KW-0694">RNA-binding</keyword>
<keyword id="KW-0949">S-adenosyl-L-methionine</keyword>
<keyword id="KW-0804">Transcription</keyword>
<keyword id="KW-0805">Transcription regulation</keyword>
<keyword id="KW-0808">Transferase</keyword>
<gene>
    <name type="primary">Setd1a</name>
</gene>
<evidence type="ECO:0000250" key="1">
    <source>
        <dbReference type="UniProtKB" id="O15047"/>
    </source>
</evidence>
<evidence type="ECO:0000250" key="2">
    <source>
        <dbReference type="UniProtKB" id="P38827"/>
    </source>
</evidence>
<evidence type="ECO:0000255" key="3">
    <source>
        <dbReference type="PROSITE-ProRule" id="PRU00155"/>
    </source>
</evidence>
<evidence type="ECO:0000255" key="4">
    <source>
        <dbReference type="PROSITE-ProRule" id="PRU00176"/>
    </source>
</evidence>
<evidence type="ECO:0000255" key="5">
    <source>
        <dbReference type="PROSITE-ProRule" id="PRU00190"/>
    </source>
</evidence>
<evidence type="ECO:0000256" key="6">
    <source>
        <dbReference type="SAM" id="MobiDB-lite"/>
    </source>
</evidence>
<evidence type="ECO:0000269" key="7">
    <source>
    </source>
</evidence>
<evidence type="ECO:0000269" key="8">
    <source>
    </source>
</evidence>
<evidence type="ECO:0000269" key="9">
    <source>
    </source>
</evidence>
<evidence type="ECO:0000305" key="10">
    <source>
    </source>
</evidence>
<accession>E9PYH6</accession>
<feature type="chain" id="PRO_0000445151" description="Histone-lysine N-methyltransferase SETD1A">
    <location>
        <begin position="1"/>
        <end position="1716"/>
    </location>
</feature>
<feature type="domain" description="RRM" evidence="4">
    <location>
        <begin position="84"/>
        <end position="172"/>
    </location>
</feature>
<feature type="domain" description="SET" evidence="5">
    <location>
        <begin position="1577"/>
        <end position="1694"/>
    </location>
</feature>
<feature type="domain" description="Post-SET" evidence="3">
    <location>
        <begin position="1700"/>
        <end position="1716"/>
    </location>
</feature>
<feature type="region of interest" description="Interaction with WDR82" evidence="1">
    <location>
        <begin position="60"/>
        <end position="89"/>
    </location>
</feature>
<feature type="region of interest" description="Disordered" evidence="6">
    <location>
        <begin position="194"/>
        <end position="367"/>
    </location>
</feature>
<feature type="region of interest" description="Disordered" evidence="6">
    <location>
        <begin position="380"/>
        <end position="499"/>
    </location>
</feature>
<feature type="region of interest" description="Disordered" evidence="6">
    <location>
        <begin position="516"/>
        <end position="670"/>
    </location>
</feature>
<feature type="region of interest" description="Disordered" evidence="6">
    <location>
        <begin position="849"/>
        <end position="869"/>
    </location>
</feature>
<feature type="region of interest" description="Disordered" evidence="6">
    <location>
        <begin position="911"/>
        <end position="1206"/>
    </location>
</feature>
<feature type="region of interest" description="Disordered" evidence="6">
    <location>
        <begin position="1230"/>
        <end position="1259"/>
    </location>
</feature>
<feature type="region of interest" description="Disordered" evidence="6">
    <location>
        <begin position="1275"/>
        <end position="1297"/>
    </location>
</feature>
<feature type="region of interest" description="Disordered" evidence="6">
    <location>
        <begin position="1355"/>
        <end position="1427"/>
    </location>
</feature>
<feature type="region of interest" description="Interaction with CFP1" evidence="1">
    <location>
        <begin position="1424"/>
        <end position="1459"/>
    </location>
</feature>
<feature type="region of interest" description="Interaction with ASH2L, RBBP5 and WDR5" evidence="1">
    <location>
        <begin position="1459"/>
        <end position="1546"/>
    </location>
</feature>
<feature type="region of interest" description="Disordered" evidence="6">
    <location>
        <begin position="1480"/>
        <end position="1508"/>
    </location>
</feature>
<feature type="short sequence motif" description="HCFC1-binding motif (HBM)" evidence="1">
    <location>
        <begin position="1307"/>
        <end position="1311"/>
    </location>
</feature>
<feature type="short sequence motif" description="WDR5 interaction motif (WIN)" evidence="1">
    <location>
        <begin position="1501"/>
        <end position="1506"/>
    </location>
</feature>
<feature type="short sequence motif" description="RxxxRR motif" evidence="2">
    <location>
        <begin position="1546"/>
        <end position="1551"/>
    </location>
</feature>
<feature type="compositionally biased region" description="Low complexity" evidence="6">
    <location>
        <begin position="222"/>
        <end position="231"/>
    </location>
</feature>
<feature type="compositionally biased region" description="Polar residues" evidence="6">
    <location>
        <begin position="243"/>
        <end position="277"/>
    </location>
</feature>
<feature type="compositionally biased region" description="Low complexity" evidence="6">
    <location>
        <begin position="278"/>
        <end position="295"/>
    </location>
</feature>
<feature type="compositionally biased region" description="Low complexity" evidence="6">
    <location>
        <begin position="315"/>
        <end position="357"/>
    </location>
</feature>
<feature type="compositionally biased region" description="Pro residues" evidence="6">
    <location>
        <begin position="430"/>
        <end position="440"/>
    </location>
</feature>
<feature type="compositionally biased region" description="Gly residues" evidence="6">
    <location>
        <begin position="441"/>
        <end position="461"/>
    </location>
</feature>
<feature type="compositionally biased region" description="Low complexity" evidence="6">
    <location>
        <begin position="477"/>
        <end position="487"/>
    </location>
</feature>
<feature type="compositionally biased region" description="Polar residues" evidence="6">
    <location>
        <begin position="488"/>
        <end position="499"/>
    </location>
</feature>
<feature type="compositionally biased region" description="Polar residues" evidence="6">
    <location>
        <begin position="581"/>
        <end position="591"/>
    </location>
</feature>
<feature type="compositionally biased region" description="Pro residues" evidence="6">
    <location>
        <begin position="606"/>
        <end position="631"/>
    </location>
</feature>
<feature type="compositionally biased region" description="Pro residues" evidence="6">
    <location>
        <begin position="638"/>
        <end position="670"/>
    </location>
</feature>
<feature type="compositionally biased region" description="Basic and acidic residues" evidence="6">
    <location>
        <begin position="859"/>
        <end position="869"/>
    </location>
</feature>
<feature type="compositionally biased region" description="Acidic residues" evidence="6">
    <location>
        <begin position="991"/>
        <end position="1009"/>
    </location>
</feature>
<feature type="compositionally biased region" description="Acidic residues" evidence="6">
    <location>
        <begin position="1018"/>
        <end position="1027"/>
    </location>
</feature>
<feature type="compositionally biased region" description="Low complexity" evidence="6">
    <location>
        <begin position="1028"/>
        <end position="1071"/>
    </location>
</feature>
<feature type="compositionally biased region" description="Pro residues" evidence="6">
    <location>
        <begin position="1130"/>
        <end position="1150"/>
    </location>
</feature>
<feature type="compositionally biased region" description="Acidic residues" evidence="6">
    <location>
        <begin position="1283"/>
        <end position="1292"/>
    </location>
</feature>
<feature type="compositionally biased region" description="Acidic residues" evidence="6">
    <location>
        <begin position="1369"/>
        <end position="1383"/>
    </location>
</feature>
<feature type="compositionally biased region" description="Basic residues" evidence="6">
    <location>
        <begin position="1399"/>
        <end position="1412"/>
    </location>
</feature>
<feature type="compositionally biased region" description="Pro residues" evidence="6">
    <location>
        <begin position="1413"/>
        <end position="1424"/>
    </location>
</feature>
<feature type="binding site" evidence="5">
    <location>
        <position position="1693"/>
    </location>
    <ligand>
        <name>S-adenosyl-L-methionine</name>
        <dbReference type="ChEBI" id="CHEBI:59789"/>
    </ligand>
</feature>
<feature type="modified residue" description="Phosphoserine" evidence="1">
    <location>
        <position position="477"/>
    </location>
</feature>
<feature type="modified residue" description="Phosphoserine" evidence="1">
    <location>
        <position position="521"/>
    </location>
</feature>
<feature type="modified residue" description="Phosphoserine" evidence="1">
    <location>
        <position position="578"/>
    </location>
</feature>
<feature type="modified residue" description="Phosphoserine" evidence="1">
    <location>
        <position position="930"/>
    </location>
</feature>
<feature type="modified residue" description="Phosphoserine" evidence="1">
    <location>
        <position position="1110"/>
    </location>
</feature>
<sequence length="1716" mass="186060">MDQEGGGDGQKAPSFQWRNYKLIVDPALDPALRRPSQKVYRYDGVHFSVSDSKYTPVEDLQDPRCHVRSKARDFSLPVPKFKLDEFYIGQIPLKEVTFARLNDNVRETFLKDMCRKYGEVEEVEILLHPRTRKHLGLARVLFTSTRGAKETVKNLHLTSVMGNIIHAQLDIKGQQRMKYYELIVNGSYTPQTVPTGGKALSEKFQGSGAAAETTEARRRSSSDTAAYPAGTTVGGTPGNGTPCSQDTNFSSSRQDTPSSFGQFTPQSSQGTPYTSRGSTPYSQDSAYSSSTTSTSFKPRRSENSYQDSFSRRHFSTSSAPATTATATSATAAATAASSSSSSSSSSSSSSSSSSSASQFRGSDSSYPAYYESWNRYQRHTSYPPRRATREDPSGASFAENTAERFPPSYTSYLAPEPNRSTDQDYRPPASEAPPPEPPEPGGGGGGSGGGGGGGGGGGGGAPSPEREEARTPPRPASPARSGSPAPETTNESVPFAQHSSLDSRIEMLLKEQRSKFSFLASDTEEEEENSSAGPGARDAGAEVPSGAGHGPCTPPPAPANFEDVAPTGSGEPGAARESPKANGQNQASPCSSGEDMEISDDDRGGSPPPAPTPPQQPPPPPPPPPPPPPPYLASLPLGYPPHQPAYLLPPRPDGPPPPEYPPPPPPPPPHIYDFVNSLELMDRLGAQWGGMPMSFQMQTQMLTRLHQLRQGKGLTAASAGPPGGAFGEAFLPFPPPQEAAYGLPYALYTQGQEGRGSYSREAYHLPLPMAAEPLPSSSVSGEEARLPHREEAEIAESKVLPSAGTVGRVLATLVQEMKSIMQRDLNRKMVENVAFGAFDQWWESKEEKAKPFQNAAKQQAKEEDKEKMKLKEPGMLSLVDWAKSGGITGIEAFAFGSGLRGALRLPSFKVKRKEPSEISEASEEKRPRPSTPAEEDEDDPEREKEAGEPGRPGTKPPKRDEERGKTQGKHRKSFTLDSEGEEASQESSSEKDEDDDDEDEEDEEQEEAVDATKKEAEASDGEDEDSDSSSQCSLYADSDGENGSTSDSESGSSSSSSSSSSSSSSSSSSESSSEEEEQSAVIPSASPPREVPEPLPAPDEKPETDGLVDSPVMPLSEKETLPTQPAGPAEEPPPSVPQPPAEPPAGPPDAAPRLDERPSSPIPLLPPPKKRRKTVSFSAAEEAPVPEPSTAAPLQAKSSGPVSRKVPRVVERTIRNLPLDHASLVKSWPEEVARGGRNRAGGRVRSTEEEEATESGTEVDLAVLADLALTPARRGLATLPTGDDSEATETSDEAERPSPLLSHILLEHNYALAIKPPPTTPAPRPLEPAPALAALFSSPADEVLEAPEVVVAEAEEPKQQLQQQHPEQEGEEEEEDEEEESESSESSSSSSSDEEGAIRRRSLRSHTRRRRPPLPPPPPPPPSFEPRSEFEQMTILYDIWNSGLDLEDMSYLRLTYERLLQQTSGADWLNDTHWVQHTITNLSTPKRKRRPQDGPREHQTGSARSEGYYPISKKEKDKYLDVCPVSARQLEGGDTQGTNRVLSERRSEQRRLLSAIGTSAIMDSDLLKLNQLKFRKKKLRFGRSRIHEWGLFAMEPIAADEMVIEYVGQNIRQMVADMREKRYVQEGIGSSYLFRVDHDTIIDATKCGNLARFINHCCTPNCYAKVITIESQKKIVIYSKQPIGVDEEITYDYKFPLEDNKIPCLCGTESCRGSLN</sequence>
<name>SET1A_MOUSE</name>
<organism>
    <name type="scientific">Mus musculus</name>
    <name type="common">Mouse</name>
    <dbReference type="NCBI Taxonomy" id="10090"/>
    <lineage>
        <taxon>Eukaryota</taxon>
        <taxon>Metazoa</taxon>
        <taxon>Chordata</taxon>
        <taxon>Craniata</taxon>
        <taxon>Vertebrata</taxon>
        <taxon>Euteleostomi</taxon>
        <taxon>Mammalia</taxon>
        <taxon>Eutheria</taxon>
        <taxon>Euarchontoglires</taxon>
        <taxon>Glires</taxon>
        <taxon>Rodentia</taxon>
        <taxon>Myomorpha</taxon>
        <taxon>Muroidea</taxon>
        <taxon>Muridae</taxon>
        <taxon>Murinae</taxon>
        <taxon>Mus</taxon>
        <taxon>Mus</taxon>
    </lineage>
</organism>
<comment type="function">
    <text evidence="1 7 8 9">Histone methyltransferase that catalyzes methyl group transfer from S-adenosyl-L-methionine to the epsilon-amino group of 'Lys-4' of histone H3 (H3K4) via a non-processive mechanism. Part of chromatin remodeling machinery, forms H3K4me1, H3K4me2 and H3K4me3 methylation marks at active chromatin sites where transcription and DNA repair take place (By similarity). Responsible for H3K4me3 enriched promoters and transcriptional programming of inner mass stem cells and neuron progenitors during embryogenesis (PubMed:24550110, PubMed:29490266, PubMed:31197650). Required for H3K4me1 mark at stalled replication forks. Mediates FANCD2-dependent nucleosome remodeling and RAD51 nucleofilaments stabilization at reversed forks, protecting them from nucleolytic degradation. Does not methylate 'Lys-4' of histone H3 if the neighboring 'Lys-9' residue is already methylated (By similarity). Has RNA binding activity towards transcripts involved in RNA processing and the DNA damage response (By similarity).</text>
</comment>
<comment type="catalytic activity">
    <reaction evidence="10">
        <text>L-lysyl(4)-[histone H3] + S-adenosyl-L-methionine = N(6)-methyl-L-lysyl(4)-[histone H3] + S-adenosyl-L-homocysteine + H(+)</text>
        <dbReference type="Rhea" id="RHEA:60264"/>
        <dbReference type="Rhea" id="RHEA-COMP:15543"/>
        <dbReference type="Rhea" id="RHEA-COMP:15547"/>
        <dbReference type="ChEBI" id="CHEBI:15378"/>
        <dbReference type="ChEBI" id="CHEBI:29969"/>
        <dbReference type="ChEBI" id="CHEBI:57856"/>
        <dbReference type="ChEBI" id="CHEBI:59789"/>
        <dbReference type="ChEBI" id="CHEBI:61929"/>
        <dbReference type="EC" id="2.1.1.364"/>
    </reaction>
    <physiologicalReaction direction="left-to-right" evidence="10">
        <dbReference type="Rhea" id="RHEA:60265"/>
    </physiologicalReaction>
</comment>
<comment type="catalytic activity">
    <reaction evidence="10">
        <text>N(6)-methyl-L-lysyl(4)-[histone H3] + S-adenosyl-L-methionine = N(6),N(6)-dimethyl-L-lysyl(4)-[histone H3] + S-adenosyl-L-homocysteine + H(+)</text>
        <dbReference type="Rhea" id="RHEA:60268"/>
        <dbReference type="Rhea" id="RHEA-COMP:15540"/>
        <dbReference type="Rhea" id="RHEA-COMP:15543"/>
        <dbReference type="ChEBI" id="CHEBI:15378"/>
        <dbReference type="ChEBI" id="CHEBI:57856"/>
        <dbReference type="ChEBI" id="CHEBI:59789"/>
        <dbReference type="ChEBI" id="CHEBI:61929"/>
        <dbReference type="ChEBI" id="CHEBI:61976"/>
    </reaction>
    <physiologicalReaction direction="left-to-right" evidence="10">
        <dbReference type="Rhea" id="RHEA:60269"/>
    </physiologicalReaction>
</comment>
<comment type="catalytic activity">
    <reaction evidence="10">
        <text>N(6),N(6)-dimethyl-L-lysyl(4)-[histone H3] + S-adenosyl-L-methionine = N(6),N(6),N(6)-trimethyl-L-lysyl(4)-[histone H3] + S-adenosyl-L-homocysteine + H(+)</text>
        <dbReference type="Rhea" id="RHEA:60272"/>
        <dbReference type="Rhea" id="RHEA-COMP:15537"/>
        <dbReference type="Rhea" id="RHEA-COMP:15540"/>
        <dbReference type="ChEBI" id="CHEBI:15378"/>
        <dbReference type="ChEBI" id="CHEBI:57856"/>
        <dbReference type="ChEBI" id="CHEBI:59789"/>
        <dbReference type="ChEBI" id="CHEBI:61961"/>
        <dbReference type="ChEBI" id="CHEBI:61976"/>
    </reaction>
    <physiologicalReaction direction="left-to-right" evidence="10">
        <dbReference type="Rhea" id="RHEA:60273"/>
    </physiologicalReaction>
</comment>
<comment type="subunit">
    <text evidence="1 8">Component of the SET1A/COMPASS complex composed of the catalytic subunit SETD1A, WDR5, WDR82, RBBP5, ASH2L/ASH2, CXXC1/CFP1, HCFC1 and DPY30 homotrimer. Forms a core complex with the evolutionary conserved subcomplex WRAD composed of WDR5, RBBP5, ASH2L/ASH2 and DPY30 subunits; WRAD differentially stimulates the methyltransferase activity. Interacts with BOD1L1 (via COMPASS-Shg1 domain) at replication forks. Interacts with HCFC1. Interacts with ASH2/ASH2L. Interacts with CXXC1/CFP1. Interacts with RBBP5. Interacts (via N-terminal region) with WDR82; the interaction is direct. Interacts (via the RRM domain) with hyperphosphorylated C-terminal domain (CTD) of RNA polymerase II large subunit (POLR2A) only in the presence of WDR82. Binds specifically to CTD heptad repeats phosphorylated on 'Ser-5' of each heptad. Interacts with ZNF335. Interacts with SUPT6H (By similarity). Interacts with NAP1L1 (PubMed:29490266). Interacts (via WIN motif) with WDR5 (By similarity).</text>
</comment>
<comment type="subcellular location">
    <subcellularLocation>
        <location evidence="7">Nucleus</location>
    </subcellularLocation>
    <subcellularLocation>
        <location evidence="1">Nucleus speckle</location>
    </subcellularLocation>
    <subcellularLocation>
        <location evidence="1">Chromosome</location>
    </subcellularLocation>
    <subcellularLocation>
        <location evidence="1">Cytoplasm</location>
    </subcellularLocation>
    <text evidence="1">Localizes to a largely non-overlapping set of euchromatic nuclear speckles with SETD1B, suggesting that SETD1A and SETD1B each bind to a unique set of target genes (By similarity). Predominantly nuclear (By similarity).</text>
</comment>
<comment type="developmental stage">
    <text evidence="7">High expression is detected in the oocyte that declines to a stable level from the 8-cell stage until 8.5 dpc.</text>
</comment>
<comment type="disruption phenotype">
    <text evidence="7">Mutant embryos fail to gastrulate and die before or at 7.5 dpc.</text>
</comment>
<comment type="similarity">
    <text evidence="5">Belongs to the class V-like SAM-binding methyltransferase superfamily.</text>
</comment>
<reference key="1">
    <citation type="journal article" date="2009" name="PLoS Biol.">
        <title>Lineage-specific biology revealed by a finished genome assembly of the mouse.</title>
        <authorList>
            <person name="Church D.M."/>
            <person name="Goodstadt L."/>
            <person name="Hillier L.W."/>
            <person name="Zody M.C."/>
            <person name="Goldstein S."/>
            <person name="She X."/>
            <person name="Bult C.J."/>
            <person name="Agarwala R."/>
            <person name="Cherry J.L."/>
            <person name="DiCuccio M."/>
            <person name="Hlavina W."/>
            <person name="Kapustin Y."/>
            <person name="Meric P."/>
            <person name="Maglott D."/>
            <person name="Birtle Z."/>
            <person name="Marques A.C."/>
            <person name="Graves T."/>
            <person name="Zhou S."/>
            <person name="Teague B."/>
            <person name="Potamousis K."/>
            <person name="Churas C."/>
            <person name="Place M."/>
            <person name="Herschleb J."/>
            <person name="Runnheim R."/>
            <person name="Forrest D."/>
            <person name="Amos-Landgraf J."/>
            <person name="Schwartz D.C."/>
            <person name="Cheng Z."/>
            <person name="Lindblad-Toh K."/>
            <person name="Eichler E.E."/>
            <person name="Ponting C.P."/>
        </authorList>
    </citation>
    <scope>NUCLEOTIDE SEQUENCE [LARGE SCALE GENOMIC DNA]</scope>
    <source>
        <strain>C57BL/6J</strain>
    </source>
</reference>
<reference key="2">
    <citation type="journal article" date="2010" name="Cell">
        <title>A tissue-specific atlas of mouse protein phosphorylation and expression.</title>
        <authorList>
            <person name="Huttlin E.L."/>
            <person name="Jedrychowski M.P."/>
            <person name="Elias J.E."/>
            <person name="Goswami T."/>
            <person name="Rad R."/>
            <person name="Beausoleil S.A."/>
            <person name="Villen J."/>
            <person name="Haas W."/>
            <person name="Sowa M.E."/>
            <person name="Gygi S.P."/>
        </authorList>
    </citation>
    <scope>IDENTIFICATION BY MASS SPECTROMETRY [LARGE SCALE ANALYSIS]</scope>
</reference>
<reference key="3">
    <citation type="journal article" date="2014" name="Development">
        <title>The H3K4 methyltransferase Setd1a is first required at the epiblast stage, whereas Setd1b becomes essential after gastrulation.</title>
        <authorList>
            <person name="Bledau A.S."/>
            <person name="Schmidt K."/>
            <person name="Neumann K."/>
            <person name="Hill U."/>
            <person name="Ciotta G."/>
            <person name="Gupta A."/>
            <person name="Torres D.C."/>
            <person name="Fu J."/>
            <person name="Kranz A."/>
            <person name="Stewart A.F."/>
            <person name="Anastassiadis K."/>
        </authorList>
    </citation>
    <scope>FUNCTION</scope>
    <scope>CATALYTIC ACTIVITY</scope>
    <scope>DISRUPTION PHENOTYPE</scope>
    <scope>DEVELOPMENTAL STAGE</scope>
    <scope>SUBCELLULAR LOCATION</scope>
</reference>
<reference key="4">
    <citation type="journal article" date="2018" name="Cell Rep.">
        <title>Nap1l1 controls embryonic neural progenitor cell proliferation and differentiation in the developing brain.</title>
        <authorList>
            <person name="Qiao H."/>
            <person name="Li Y."/>
            <person name="Feng C."/>
            <person name="Duo S."/>
            <person name="Ji F."/>
            <person name="Jiao J."/>
        </authorList>
    </citation>
    <scope>FUNCTION</scope>
    <scope>INTERACTION WITH NAP1L1</scope>
</reference>
<reference key="5">
    <citation type="journal article" date="2019" name="Neurosci. Bull.">
        <title>De novo and inherited SETD1A variants in early-onset epilepsy.</title>
        <authorList>
            <person name="Yu X."/>
            <person name="Yang L."/>
            <person name="Li J."/>
            <person name="Li W."/>
            <person name="Li D."/>
            <person name="Wang R."/>
            <person name="Wu K."/>
            <person name="Chen W."/>
            <person name="Zhang Y."/>
            <person name="Qiu Z."/>
            <person name="Zhou W."/>
        </authorList>
    </citation>
    <scope>FUNCTION</scope>
</reference>
<proteinExistence type="evidence at protein level"/>